<evidence type="ECO:0000255" key="1">
    <source>
        <dbReference type="HAMAP-Rule" id="MF_01151"/>
    </source>
</evidence>
<evidence type="ECO:0000256" key="2">
    <source>
        <dbReference type="SAM" id="MobiDB-lite"/>
    </source>
</evidence>
<proteinExistence type="inferred from homology"/>
<reference key="1">
    <citation type="journal article" date="2001" name="Nature">
        <title>Genome sequence of Yersinia pestis, the causative agent of plague.</title>
        <authorList>
            <person name="Parkhill J."/>
            <person name="Wren B.W."/>
            <person name="Thomson N.R."/>
            <person name="Titball R.W."/>
            <person name="Holden M.T.G."/>
            <person name="Prentice M.B."/>
            <person name="Sebaihia M."/>
            <person name="James K.D."/>
            <person name="Churcher C.M."/>
            <person name="Mungall K.L."/>
            <person name="Baker S."/>
            <person name="Basham D."/>
            <person name="Bentley S.D."/>
            <person name="Brooks K."/>
            <person name="Cerdeno-Tarraga A.-M."/>
            <person name="Chillingworth T."/>
            <person name="Cronin A."/>
            <person name="Davies R.M."/>
            <person name="Davis P."/>
            <person name="Dougan G."/>
            <person name="Feltwell T."/>
            <person name="Hamlin N."/>
            <person name="Holroyd S."/>
            <person name="Jagels K."/>
            <person name="Karlyshev A.V."/>
            <person name="Leather S."/>
            <person name="Moule S."/>
            <person name="Oyston P.C.F."/>
            <person name="Quail M.A."/>
            <person name="Rutherford K.M."/>
            <person name="Simmonds M."/>
            <person name="Skelton J."/>
            <person name="Stevens K."/>
            <person name="Whitehead S."/>
            <person name="Barrell B.G."/>
        </authorList>
    </citation>
    <scope>NUCLEOTIDE SEQUENCE [LARGE SCALE GENOMIC DNA]</scope>
    <source>
        <strain>CO-92 / Biovar Orientalis</strain>
    </source>
</reference>
<reference key="2">
    <citation type="journal article" date="2002" name="J. Bacteriol.">
        <title>Genome sequence of Yersinia pestis KIM.</title>
        <authorList>
            <person name="Deng W."/>
            <person name="Burland V."/>
            <person name="Plunkett G. III"/>
            <person name="Boutin A."/>
            <person name="Mayhew G.F."/>
            <person name="Liss P."/>
            <person name="Perna N.T."/>
            <person name="Rose D.J."/>
            <person name="Mau B."/>
            <person name="Zhou S."/>
            <person name="Schwartz D.C."/>
            <person name="Fetherston J.D."/>
            <person name="Lindler L.E."/>
            <person name="Brubaker R.R."/>
            <person name="Plano G.V."/>
            <person name="Straley S.C."/>
            <person name="McDonough K.A."/>
            <person name="Nilles M.L."/>
            <person name="Matson J.S."/>
            <person name="Blattner F.R."/>
            <person name="Perry R.D."/>
        </authorList>
    </citation>
    <scope>NUCLEOTIDE SEQUENCE [LARGE SCALE GENOMIC DNA]</scope>
    <source>
        <strain>KIM10+ / Biovar Mediaevalis</strain>
    </source>
</reference>
<reference key="3">
    <citation type="journal article" date="2004" name="DNA Res.">
        <title>Complete genome sequence of Yersinia pestis strain 91001, an isolate avirulent to humans.</title>
        <authorList>
            <person name="Song Y."/>
            <person name="Tong Z."/>
            <person name="Wang J."/>
            <person name="Wang L."/>
            <person name="Guo Z."/>
            <person name="Han Y."/>
            <person name="Zhang J."/>
            <person name="Pei D."/>
            <person name="Zhou D."/>
            <person name="Qin H."/>
            <person name="Pang X."/>
            <person name="Han Y."/>
            <person name="Zhai J."/>
            <person name="Li M."/>
            <person name="Cui B."/>
            <person name="Qi Z."/>
            <person name="Jin L."/>
            <person name="Dai R."/>
            <person name="Chen F."/>
            <person name="Li S."/>
            <person name="Ye C."/>
            <person name="Du Z."/>
            <person name="Lin W."/>
            <person name="Wang J."/>
            <person name="Yu J."/>
            <person name="Yang H."/>
            <person name="Wang J."/>
            <person name="Huang P."/>
            <person name="Yang R."/>
        </authorList>
    </citation>
    <scope>NUCLEOTIDE SEQUENCE [LARGE SCALE GENOMIC DNA]</scope>
    <source>
        <strain>91001 / Biovar Mediaevalis</strain>
    </source>
</reference>
<accession>Q7CH40</accession>
<accession>Q0WHT8</accession>
<accession>Q74W49</accession>
<accession>Q8ZH08</accession>
<protein>
    <recommendedName>
        <fullName evidence="1">Protein GrpE</fullName>
    </recommendedName>
    <alternativeName>
        <fullName evidence="1">HSP-70 cofactor</fullName>
    </alternativeName>
</protein>
<sequence>MSSKEQKTPNEQVSEEMENTAEQQVEATQETGECVDPRVAELEVQLSDALQRERESLLRAKAEVENIRRRTELDVEKAHKFALERFSSELLPVIDNLERALDTADKTNTELISMIEGVELTLKSLLDAVGKFGIEVVGETHVPFNPEVHQAMTMLESADHEPNHVMMVMQKGYTLNGRLLRPAMVAVSKAKS</sequence>
<keyword id="KW-0143">Chaperone</keyword>
<keyword id="KW-0963">Cytoplasm</keyword>
<keyword id="KW-1185">Reference proteome</keyword>
<keyword id="KW-0346">Stress response</keyword>
<feature type="chain" id="PRO_0000113904" description="Protein GrpE">
    <location>
        <begin position="1"/>
        <end position="192"/>
    </location>
</feature>
<feature type="region of interest" description="Disordered" evidence="2">
    <location>
        <begin position="1"/>
        <end position="34"/>
    </location>
</feature>
<feature type="compositionally biased region" description="Polar residues" evidence="2">
    <location>
        <begin position="20"/>
        <end position="31"/>
    </location>
</feature>
<comment type="function">
    <text evidence="1">Participates actively in the response to hyperosmotic and heat shock by preventing the aggregation of stress-denatured proteins, in association with DnaK and GrpE. It is the nucleotide exchange factor for DnaK and may function as a thermosensor. Unfolded proteins bind initially to DnaJ; upon interaction with the DnaJ-bound protein, DnaK hydrolyzes its bound ATP, resulting in the formation of a stable complex. GrpE releases ADP from DnaK; ATP binding to DnaK triggers the release of the substrate protein, thus completing the reaction cycle. Several rounds of ATP-dependent interactions between DnaJ, DnaK and GrpE are required for fully efficient folding.</text>
</comment>
<comment type="subunit">
    <text evidence="1">Homodimer.</text>
</comment>
<comment type="subcellular location">
    <subcellularLocation>
        <location evidence="1">Cytoplasm</location>
    </subcellularLocation>
</comment>
<comment type="similarity">
    <text evidence="1">Belongs to the GrpE family.</text>
</comment>
<gene>
    <name evidence="1" type="primary">grpE</name>
    <name type="ordered locus">YPO1107</name>
    <name type="ordered locus">y3073</name>
    <name type="ordered locus">YP_1049</name>
</gene>
<name>GRPE_YERPE</name>
<organism>
    <name type="scientific">Yersinia pestis</name>
    <dbReference type="NCBI Taxonomy" id="632"/>
    <lineage>
        <taxon>Bacteria</taxon>
        <taxon>Pseudomonadati</taxon>
        <taxon>Pseudomonadota</taxon>
        <taxon>Gammaproteobacteria</taxon>
        <taxon>Enterobacterales</taxon>
        <taxon>Yersiniaceae</taxon>
        <taxon>Yersinia</taxon>
    </lineage>
</organism>
<dbReference type="EMBL" id="AL590842">
    <property type="protein sequence ID" value="CAL19773.1"/>
    <property type="molecule type" value="Genomic_DNA"/>
</dbReference>
<dbReference type="EMBL" id="AE009952">
    <property type="protein sequence ID" value="AAM86623.1"/>
    <property type="molecule type" value="Genomic_DNA"/>
</dbReference>
<dbReference type="EMBL" id="AE017042">
    <property type="protein sequence ID" value="AAS61299.1"/>
    <property type="molecule type" value="Genomic_DNA"/>
</dbReference>
<dbReference type="PIR" id="AC0136">
    <property type="entry name" value="AC0136"/>
</dbReference>
<dbReference type="RefSeq" id="WP_002210720.1">
    <property type="nucleotide sequence ID" value="NZ_WUCM01000016.1"/>
</dbReference>
<dbReference type="RefSeq" id="YP_002346150.1">
    <property type="nucleotide sequence ID" value="NC_003143.1"/>
</dbReference>
<dbReference type="SMR" id="Q7CH40"/>
<dbReference type="IntAct" id="Q7CH40">
    <property type="interactions" value="2"/>
</dbReference>
<dbReference type="STRING" id="214092.YPO1107"/>
<dbReference type="PaxDb" id="214092-YPO1107"/>
<dbReference type="DNASU" id="1148020"/>
<dbReference type="EnsemblBacteria" id="AAS61299">
    <property type="protein sequence ID" value="AAS61299"/>
    <property type="gene ID" value="YP_1049"/>
</dbReference>
<dbReference type="GeneID" id="57977243"/>
<dbReference type="KEGG" id="ype:YPO1107"/>
<dbReference type="KEGG" id="ypk:y3073"/>
<dbReference type="KEGG" id="ypm:YP_1049"/>
<dbReference type="PATRIC" id="fig|214092.21.peg.1399"/>
<dbReference type="eggNOG" id="COG0576">
    <property type="taxonomic scope" value="Bacteria"/>
</dbReference>
<dbReference type="HOGENOM" id="CLU_057217_6_0_6"/>
<dbReference type="OMA" id="PHRHQAI"/>
<dbReference type="OrthoDB" id="9789811at2"/>
<dbReference type="Proteomes" id="UP000000815">
    <property type="component" value="Chromosome"/>
</dbReference>
<dbReference type="Proteomes" id="UP000001019">
    <property type="component" value="Chromosome"/>
</dbReference>
<dbReference type="Proteomes" id="UP000002490">
    <property type="component" value="Chromosome"/>
</dbReference>
<dbReference type="GO" id="GO:0005829">
    <property type="term" value="C:cytosol"/>
    <property type="evidence" value="ECO:0000318"/>
    <property type="project" value="GO_Central"/>
</dbReference>
<dbReference type="GO" id="GO:0000774">
    <property type="term" value="F:adenyl-nucleotide exchange factor activity"/>
    <property type="evidence" value="ECO:0000318"/>
    <property type="project" value="GO_Central"/>
</dbReference>
<dbReference type="GO" id="GO:0042803">
    <property type="term" value="F:protein homodimerization activity"/>
    <property type="evidence" value="ECO:0007669"/>
    <property type="project" value="InterPro"/>
</dbReference>
<dbReference type="GO" id="GO:0051087">
    <property type="term" value="F:protein-folding chaperone binding"/>
    <property type="evidence" value="ECO:0007669"/>
    <property type="project" value="InterPro"/>
</dbReference>
<dbReference type="GO" id="GO:0051082">
    <property type="term" value="F:unfolded protein binding"/>
    <property type="evidence" value="ECO:0000318"/>
    <property type="project" value="GO_Central"/>
</dbReference>
<dbReference type="GO" id="GO:0006457">
    <property type="term" value="P:protein folding"/>
    <property type="evidence" value="ECO:0007669"/>
    <property type="project" value="InterPro"/>
</dbReference>
<dbReference type="CDD" id="cd00446">
    <property type="entry name" value="GrpE"/>
    <property type="match status" value="1"/>
</dbReference>
<dbReference type="FunFam" id="2.30.22.10:FF:000001">
    <property type="entry name" value="Protein GrpE"/>
    <property type="match status" value="1"/>
</dbReference>
<dbReference type="FunFam" id="3.90.20.20:FF:000001">
    <property type="entry name" value="Protein GrpE"/>
    <property type="match status" value="1"/>
</dbReference>
<dbReference type="Gene3D" id="3.90.20.20">
    <property type="match status" value="1"/>
</dbReference>
<dbReference type="Gene3D" id="2.30.22.10">
    <property type="entry name" value="Head domain of nucleotide exchange factor GrpE"/>
    <property type="match status" value="1"/>
</dbReference>
<dbReference type="HAMAP" id="MF_01151">
    <property type="entry name" value="GrpE"/>
    <property type="match status" value="1"/>
</dbReference>
<dbReference type="InterPro" id="IPR000740">
    <property type="entry name" value="GrpE"/>
</dbReference>
<dbReference type="InterPro" id="IPR013805">
    <property type="entry name" value="GrpE_coiled_coil"/>
</dbReference>
<dbReference type="InterPro" id="IPR009012">
    <property type="entry name" value="GrpE_head"/>
</dbReference>
<dbReference type="NCBIfam" id="NF010737">
    <property type="entry name" value="PRK14139.1"/>
    <property type="match status" value="1"/>
</dbReference>
<dbReference type="NCBIfam" id="NF010738">
    <property type="entry name" value="PRK14140.1"/>
    <property type="match status" value="1"/>
</dbReference>
<dbReference type="NCBIfam" id="NF010748">
    <property type="entry name" value="PRK14150.1"/>
    <property type="match status" value="1"/>
</dbReference>
<dbReference type="PANTHER" id="PTHR21237">
    <property type="entry name" value="GRPE PROTEIN"/>
    <property type="match status" value="1"/>
</dbReference>
<dbReference type="PANTHER" id="PTHR21237:SF23">
    <property type="entry name" value="GRPE PROTEIN HOMOLOG, MITOCHONDRIAL"/>
    <property type="match status" value="1"/>
</dbReference>
<dbReference type="Pfam" id="PF01025">
    <property type="entry name" value="GrpE"/>
    <property type="match status" value="1"/>
</dbReference>
<dbReference type="PRINTS" id="PR00773">
    <property type="entry name" value="GRPEPROTEIN"/>
</dbReference>
<dbReference type="SUPFAM" id="SSF58014">
    <property type="entry name" value="Coiled-coil domain of nucleotide exchange factor GrpE"/>
    <property type="match status" value="1"/>
</dbReference>
<dbReference type="SUPFAM" id="SSF51064">
    <property type="entry name" value="Head domain of nucleotide exchange factor GrpE"/>
    <property type="match status" value="1"/>
</dbReference>
<dbReference type="PROSITE" id="PS01071">
    <property type="entry name" value="GRPE"/>
    <property type="match status" value="1"/>
</dbReference>